<accession>P0A755</accession>
<accession>P31577</accession>
<accession>P75629</accession>
<protein>
    <recommendedName>
        <fullName evidence="1">Glutathione-regulated potassium-efflux system ancillary protein KefF</fullName>
    </recommendedName>
    <alternativeName>
        <fullName evidence="1">Quinone oxidoreductase KefF</fullName>
        <ecNumber evidence="1">1.6.5.2</ecNumber>
    </alternativeName>
</protein>
<feature type="chain" id="PRO_0000071637" description="Glutathione-regulated potassium-efflux system ancillary protein KefF">
    <location>
        <begin position="1"/>
        <end position="176"/>
    </location>
</feature>
<feature type="binding site" evidence="1">
    <location>
        <position position="8"/>
    </location>
    <ligand>
        <name>FMN</name>
        <dbReference type="ChEBI" id="CHEBI:58210"/>
    </ligand>
</feature>
<feature type="binding site" evidence="1">
    <location>
        <begin position="14"/>
        <end position="17"/>
    </location>
    <ligand>
        <name>FMN</name>
        <dbReference type="ChEBI" id="CHEBI:58210"/>
    </ligand>
</feature>
<feature type="binding site" evidence="1">
    <location>
        <begin position="65"/>
        <end position="68"/>
    </location>
    <ligand>
        <name>FMN</name>
        <dbReference type="ChEBI" id="CHEBI:58210"/>
    </ligand>
</feature>
<feature type="binding site" evidence="1">
    <location>
        <begin position="105"/>
        <end position="108"/>
    </location>
    <ligand>
        <name>FMN</name>
        <dbReference type="ChEBI" id="CHEBI:58210"/>
    </ligand>
</feature>
<sequence>MILIIYAHPYPHHSHANKRMLEQARTLEGVEIRSLYQLYPDFNIDIAAEQEALSRADLIVWQHPMQWYSIPPLLKLWIDKVFSHGWAYGHGGTALHGKHLLWAVTTGGGESHFEIGAHPGFDVLSQPLQATAIYCGLNWLPPFAMHCTFICDDETLEGQARHYKQRLLEWQEAHHG</sequence>
<proteinExistence type="inferred from homology"/>
<name>KEFF_ECOL6</name>
<comment type="function">
    <text evidence="1">Regulatory subunit of a potassium efflux system that confers protection against electrophiles. Required for full activity of KefC. Shows redox enzymatic activity, but this enzymatic activity is not required for activation of KefC.</text>
</comment>
<comment type="catalytic activity">
    <reaction evidence="1">
        <text>a quinone + NADH + H(+) = a quinol + NAD(+)</text>
        <dbReference type="Rhea" id="RHEA:46160"/>
        <dbReference type="ChEBI" id="CHEBI:15378"/>
        <dbReference type="ChEBI" id="CHEBI:24646"/>
        <dbReference type="ChEBI" id="CHEBI:57540"/>
        <dbReference type="ChEBI" id="CHEBI:57945"/>
        <dbReference type="ChEBI" id="CHEBI:132124"/>
        <dbReference type="EC" id="1.6.5.2"/>
    </reaction>
</comment>
<comment type="catalytic activity">
    <reaction evidence="1">
        <text>a quinone + NADPH + H(+) = a quinol + NADP(+)</text>
        <dbReference type="Rhea" id="RHEA:46164"/>
        <dbReference type="ChEBI" id="CHEBI:15378"/>
        <dbReference type="ChEBI" id="CHEBI:24646"/>
        <dbReference type="ChEBI" id="CHEBI:57783"/>
        <dbReference type="ChEBI" id="CHEBI:58349"/>
        <dbReference type="ChEBI" id="CHEBI:132124"/>
        <dbReference type="EC" id="1.6.5.2"/>
    </reaction>
</comment>
<comment type="cofactor">
    <cofactor evidence="1">
        <name>FMN</name>
        <dbReference type="ChEBI" id="CHEBI:58210"/>
    </cofactor>
</comment>
<comment type="subunit">
    <text evidence="1">Homodimer. Interacts with KefC.</text>
</comment>
<comment type="subcellular location">
    <subcellularLocation>
        <location evidence="1">Cell inner membrane</location>
        <topology evidence="1">Peripheral membrane protein</topology>
        <orientation evidence="1">Cytoplasmic side</orientation>
    </subcellularLocation>
</comment>
<comment type="similarity">
    <text evidence="1">Belongs to the NAD(P)H dehydrogenase (quinone) family. KefF subfamily.</text>
</comment>
<keyword id="KW-0997">Cell inner membrane</keyword>
<keyword id="KW-1003">Cell membrane</keyword>
<keyword id="KW-0285">Flavoprotein</keyword>
<keyword id="KW-0288">FMN</keyword>
<keyword id="KW-0472">Membrane</keyword>
<keyword id="KW-0520">NAD</keyword>
<keyword id="KW-0560">Oxidoreductase</keyword>
<keyword id="KW-1185">Reference proteome</keyword>
<organism>
    <name type="scientific">Escherichia coli O6:H1 (strain CFT073 / ATCC 700928 / UPEC)</name>
    <dbReference type="NCBI Taxonomy" id="199310"/>
    <lineage>
        <taxon>Bacteria</taxon>
        <taxon>Pseudomonadati</taxon>
        <taxon>Pseudomonadota</taxon>
        <taxon>Gammaproteobacteria</taxon>
        <taxon>Enterobacterales</taxon>
        <taxon>Enterobacteriaceae</taxon>
        <taxon>Escherichia</taxon>
    </lineage>
</organism>
<reference key="1">
    <citation type="journal article" date="2002" name="Proc. Natl. Acad. Sci. U.S.A.">
        <title>Extensive mosaic structure revealed by the complete genome sequence of uropathogenic Escherichia coli.</title>
        <authorList>
            <person name="Welch R.A."/>
            <person name="Burland V."/>
            <person name="Plunkett G. III"/>
            <person name="Redford P."/>
            <person name="Roesch P."/>
            <person name="Rasko D."/>
            <person name="Buckles E.L."/>
            <person name="Liou S.-R."/>
            <person name="Boutin A."/>
            <person name="Hackett J."/>
            <person name="Stroud D."/>
            <person name="Mayhew G.F."/>
            <person name="Rose D.J."/>
            <person name="Zhou S."/>
            <person name="Schwartz D.C."/>
            <person name="Perna N.T."/>
            <person name="Mobley H.L.T."/>
            <person name="Donnenberg M.S."/>
            <person name="Blattner F.R."/>
        </authorList>
    </citation>
    <scope>NUCLEOTIDE SEQUENCE [LARGE SCALE GENOMIC DNA]</scope>
    <source>
        <strain>CFT073 / ATCC 700928 / UPEC</strain>
    </source>
</reference>
<gene>
    <name evidence="1" type="primary">kefF</name>
    <name type="ordered locus">c0056</name>
</gene>
<dbReference type="EC" id="1.6.5.2" evidence="1"/>
<dbReference type="EMBL" id="AE014075">
    <property type="protein sequence ID" value="AAN78552.1"/>
    <property type="molecule type" value="Genomic_DNA"/>
</dbReference>
<dbReference type="RefSeq" id="WP_000600725.1">
    <property type="nucleotide sequence ID" value="NZ_CP051263.1"/>
</dbReference>
<dbReference type="SMR" id="P0A755"/>
<dbReference type="STRING" id="199310.c0056"/>
<dbReference type="GeneID" id="89519427"/>
<dbReference type="KEGG" id="ecc:c0056"/>
<dbReference type="eggNOG" id="COG2249">
    <property type="taxonomic scope" value="Bacteria"/>
</dbReference>
<dbReference type="HOGENOM" id="CLU_058643_0_2_6"/>
<dbReference type="BioCyc" id="ECOL199310:C0056-MONOMER"/>
<dbReference type="Proteomes" id="UP000001410">
    <property type="component" value="Chromosome"/>
</dbReference>
<dbReference type="GO" id="GO:0005886">
    <property type="term" value="C:plasma membrane"/>
    <property type="evidence" value="ECO:0007669"/>
    <property type="project" value="UniProtKB-SubCell"/>
</dbReference>
<dbReference type="GO" id="GO:0009055">
    <property type="term" value="F:electron transfer activity"/>
    <property type="evidence" value="ECO:0007669"/>
    <property type="project" value="TreeGrafter"/>
</dbReference>
<dbReference type="GO" id="GO:0010181">
    <property type="term" value="F:FMN binding"/>
    <property type="evidence" value="ECO:0007669"/>
    <property type="project" value="UniProtKB-UniRule"/>
</dbReference>
<dbReference type="GO" id="GO:0050136">
    <property type="term" value="F:NADH:ubiquinone reductase (non-electrogenic) activity"/>
    <property type="evidence" value="ECO:0007669"/>
    <property type="project" value="RHEA"/>
</dbReference>
<dbReference type="GO" id="GO:0008753">
    <property type="term" value="F:NADPH dehydrogenase (quinone) activity"/>
    <property type="evidence" value="ECO:0007669"/>
    <property type="project" value="RHEA"/>
</dbReference>
<dbReference type="GO" id="GO:1901381">
    <property type="term" value="P:positive regulation of potassium ion transmembrane transport"/>
    <property type="evidence" value="ECO:0007669"/>
    <property type="project" value="UniProtKB-UniRule"/>
</dbReference>
<dbReference type="GO" id="GO:0006813">
    <property type="term" value="P:potassium ion transport"/>
    <property type="evidence" value="ECO:0007669"/>
    <property type="project" value="InterPro"/>
</dbReference>
<dbReference type="FunFam" id="3.40.50.360:FF:000008">
    <property type="entry name" value="Glutathione-regulated potassium-efflux system ancillary protein KefF"/>
    <property type="match status" value="1"/>
</dbReference>
<dbReference type="Gene3D" id="3.40.50.360">
    <property type="match status" value="1"/>
</dbReference>
<dbReference type="HAMAP" id="MF_01414">
    <property type="entry name" value="K_H_efflux_KefF"/>
    <property type="match status" value="1"/>
</dbReference>
<dbReference type="InterPro" id="IPR003680">
    <property type="entry name" value="Flavodoxin_fold"/>
</dbReference>
<dbReference type="InterPro" id="IPR029039">
    <property type="entry name" value="Flavoprotein-like_sf"/>
</dbReference>
<dbReference type="InterPro" id="IPR023948">
    <property type="entry name" value="K_H_efflux_KefF"/>
</dbReference>
<dbReference type="InterPro" id="IPR046980">
    <property type="entry name" value="KefG/KefF"/>
</dbReference>
<dbReference type="NCBIfam" id="NF002044">
    <property type="entry name" value="PRK00871.1"/>
    <property type="match status" value="1"/>
</dbReference>
<dbReference type="PANTHER" id="PTHR47307:SF2">
    <property type="entry name" value="GLUTATHIONE-REGULATED POTASSIUM-EFFLUX SYSTEM ANCILLARY PROTEIN KEFF"/>
    <property type="match status" value="1"/>
</dbReference>
<dbReference type="PANTHER" id="PTHR47307">
    <property type="entry name" value="GLUTATHIONE-REGULATED POTASSIUM-EFFLUX SYSTEM ANCILLARY PROTEIN KEFG"/>
    <property type="match status" value="1"/>
</dbReference>
<dbReference type="Pfam" id="PF02525">
    <property type="entry name" value="Flavodoxin_2"/>
    <property type="match status" value="1"/>
</dbReference>
<dbReference type="SUPFAM" id="SSF52218">
    <property type="entry name" value="Flavoproteins"/>
    <property type="match status" value="1"/>
</dbReference>
<evidence type="ECO:0000255" key="1">
    <source>
        <dbReference type="HAMAP-Rule" id="MF_01414"/>
    </source>
</evidence>